<accession>C0LGQ5</accession>
<accession>Q9SN91</accession>
<dbReference type="EC" id="2.7.11.1" evidence="5"/>
<dbReference type="EMBL" id="AL022224">
    <property type="protein sequence ID" value="CAA18239.1"/>
    <property type="status" value="ALT_SEQ"/>
    <property type="molecule type" value="Genomic_DNA"/>
</dbReference>
<dbReference type="EMBL" id="AL161552">
    <property type="protein sequence ID" value="CAB79014.1"/>
    <property type="status" value="ALT_SEQ"/>
    <property type="molecule type" value="Genomic_DNA"/>
</dbReference>
<dbReference type="EMBL" id="CP002687">
    <property type="protein sequence ID" value="AEE84279.1"/>
    <property type="molecule type" value="Genomic_DNA"/>
</dbReference>
<dbReference type="EMBL" id="FJ708746">
    <property type="protein sequence ID" value="ACN59340.1"/>
    <property type="molecule type" value="mRNA"/>
</dbReference>
<dbReference type="PIR" id="T05322">
    <property type="entry name" value="T05322"/>
</dbReference>
<dbReference type="RefSeq" id="NP_193747.2">
    <property type="nucleotide sequence ID" value="NM_118133.3"/>
</dbReference>
<dbReference type="PDB" id="6S6Q">
    <property type="method" value="X-ray"/>
    <property type="resolution" value="2.95 A"/>
    <property type="chains" value="A/B=18-870"/>
</dbReference>
<dbReference type="PDBsum" id="6S6Q"/>
<dbReference type="SMR" id="C0LGQ5"/>
<dbReference type="BioGRID" id="13052">
    <property type="interactions" value="57"/>
</dbReference>
<dbReference type="FunCoup" id="C0LGQ5">
    <property type="interactions" value="190"/>
</dbReference>
<dbReference type="IntAct" id="C0LGQ5">
    <property type="interactions" value="71"/>
</dbReference>
<dbReference type="STRING" id="3702.C0LGQ5"/>
<dbReference type="GlyCosmos" id="C0LGQ5">
    <property type="glycosylation" value="20 sites, No reported glycans"/>
</dbReference>
<dbReference type="GlyGen" id="C0LGQ5">
    <property type="glycosylation" value="20 sites"/>
</dbReference>
<dbReference type="PaxDb" id="3702-AT4G20140.1"/>
<dbReference type="ProteomicsDB" id="247223"/>
<dbReference type="EnsemblPlants" id="AT4G20140.1">
    <property type="protein sequence ID" value="AT4G20140.1"/>
    <property type="gene ID" value="AT4G20140"/>
</dbReference>
<dbReference type="GeneID" id="827760"/>
<dbReference type="Gramene" id="AT4G20140.1">
    <property type="protein sequence ID" value="AT4G20140.1"/>
    <property type="gene ID" value="AT4G20140"/>
</dbReference>
<dbReference type="KEGG" id="ath:AT4G20140"/>
<dbReference type="Araport" id="AT4G20140"/>
<dbReference type="TAIR" id="AT4G20140">
    <property type="gene designation" value="GSO1"/>
</dbReference>
<dbReference type="eggNOG" id="ENOG502QRD1">
    <property type="taxonomic scope" value="Eukaryota"/>
</dbReference>
<dbReference type="HOGENOM" id="CLU_000288_22_0_1"/>
<dbReference type="InParanoid" id="C0LGQ5"/>
<dbReference type="OMA" id="NPNFCTW"/>
<dbReference type="PhylomeDB" id="C0LGQ5"/>
<dbReference type="PRO" id="PR:C0LGQ5"/>
<dbReference type="Proteomes" id="UP000006548">
    <property type="component" value="Chromosome 4"/>
</dbReference>
<dbReference type="ExpressionAtlas" id="C0LGQ5">
    <property type="expression patterns" value="baseline and differential"/>
</dbReference>
<dbReference type="GO" id="GO:0048226">
    <property type="term" value="C:Casparian strip"/>
    <property type="evidence" value="ECO:0000315"/>
    <property type="project" value="UniProtKB"/>
</dbReference>
<dbReference type="GO" id="GO:0005886">
    <property type="term" value="C:plasma membrane"/>
    <property type="evidence" value="ECO:0000314"/>
    <property type="project" value="TAIR"/>
</dbReference>
<dbReference type="GO" id="GO:0005524">
    <property type="term" value="F:ATP binding"/>
    <property type="evidence" value="ECO:0007669"/>
    <property type="project" value="UniProtKB-KW"/>
</dbReference>
<dbReference type="GO" id="GO:0106310">
    <property type="term" value="F:protein serine kinase activity"/>
    <property type="evidence" value="ECO:0007669"/>
    <property type="project" value="RHEA"/>
</dbReference>
<dbReference type="GO" id="GO:0004674">
    <property type="term" value="F:protein serine/threonine kinase activity"/>
    <property type="evidence" value="ECO:0007669"/>
    <property type="project" value="UniProtKB-KW"/>
</dbReference>
<dbReference type="GO" id="GO:0160073">
    <property type="term" value="P:Casparian strip assembly"/>
    <property type="evidence" value="ECO:0000315"/>
    <property type="project" value="UniProtKB"/>
</dbReference>
<dbReference type="GO" id="GO:0035987">
    <property type="term" value="P:endodermal cell differentiation"/>
    <property type="evidence" value="ECO:0000270"/>
    <property type="project" value="UniProtKB"/>
</dbReference>
<dbReference type="GO" id="GO:0045184">
    <property type="term" value="P:establishment of protein localization"/>
    <property type="evidence" value="ECO:0000315"/>
    <property type="project" value="UniProtKB"/>
</dbReference>
<dbReference type="GO" id="GO:0055075">
    <property type="term" value="P:potassium ion homeostasis"/>
    <property type="evidence" value="ECO:0000315"/>
    <property type="project" value="UniProtKB"/>
</dbReference>
<dbReference type="GO" id="GO:0051302">
    <property type="term" value="P:regulation of cell division"/>
    <property type="evidence" value="ECO:0000315"/>
    <property type="project" value="UniProtKB"/>
</dbReference>
<dbReference type="GO" id="GO:0042659">
    <property type="term" value="P:regulation of cell fate specification"/>
    <property type="evidence" value="ECO:0000315"/>
    <property type="project" value="UniProtKB"/>
</dbReference>
<dbReference type="GO" id="GO:2000280">
    <property type="term" value="P:regulation of root development"/>
    <property type="evidence" value="ECO:0000315"/>
    <property type="project" value="UniProtKB"/>
</dbReference>
<dbReference type="GO" id="GO:2000067">
    <property type="term" value="P:regulation of root morphogenesis"/>
    <property type="evidence" value="ECO:0000315"/>
    <property type="project" value="UniProtKB"/>
</dbReference>
<dbReference type="GO" id="GO:0009611">
    <property type="term" value="P:response to wounding"/>
    <property type="evidence" value="ECO:0000270"/>
    <property type="project" value="UniProtKB"/>
</dbReference>
<dbReference type="GO" id="GO:0090708">
    <property type="term" value="P:specification of plant organ axis polarity"/>
    <property type="evidence" value="ECO:0000315"/>
    <property type="project" value="UniProtKB"/>
</dbReference>
<dbReference type="FunFam" id="1.10.510.10:FF:000417">
    <property type="entry name" value="Leucine-rich repeat receptor-like protein kinase"/>
    <property type="match status" value="1"/>
</dbReference>
<dbReference type="FunFam" id="3.80.10.10:FF:000177">
    <property type="entry name" value="Leucine-rich repeat receptor-like serine/threonine-protein kinase At1g17230"/>
    <property type="match status" value="1"/>
</dbReference>
<dbReference type="FunFam" id="3.80.10.10:FF:000544">
    <property type="entry name" value="Leucine-rich repeat receptor-like serine/threonine-protein kinase BAM3"/>
    <property type="match status" value="1"/>
</dbReference>
<dbReference type="FunFam" id="3.80.10.10:FF:000041">
    <property type="entry name" value="LRR receptor-like serine/threonine-protein kinase ERECTA"/>
    <property type="match status" value="1"/>
</dbReference>
<dbReference type="FunFam" id="3.80.10.10:FF:000101">
    <property type="entry name" value="LRR receptor-like serine/threonine-protein kinase ERECTA"/>
    <property type="match status" value="1"/>
</dbReference>
<dbReference type="FunFam" id="3.30.200.20:FF:000687">
    <property type="entry name" value="LRR receptor-like serine/threonine-protein kinase GSO1"/>
    <property type="match status" value="1"/>
</dbReference>
<dbReference type="FunFam" id="3.80.10.10:FF:000939">
    <property type="entry name" value="LRR receptor-like serine/threonine-protein kinase GSO1"/>
    <property type="match status" value="1"/>
</dbReference>
<dbReference type="Gene3D" id="3.30.200.20">
    <property type="entry name" value="Phosphorylase Kinase, domain 1"/>
    <property type="match status" value="1"/>
</dbReference>
<dbReference type="Gene3D" id="3.80.10.10">
    <property type="entry name" value="Ribonuclease Inhibitor"/>
    <property type="match status" value="5"/>
</dbReference>
<dbReference type="Gene3D" id="1.10.510.10">
    <property type="entry name" value="Transferase(Phosphotransferase) domain 1"/>
    <property type="match status" value="1"/>
</dbReference>
<dbReference type="InterPro" id="IPR011009">
    <property type="entry name" value="Kinase-like_dom_sf"/>
</dbReference>
<dbReference type="InterPro" id="IPR001611">
    <property type="entry name" value="Leu-rich_rpt"/>
</dbReference>
<dbReference type="InterPro" id="IPR003591">
    <property type="entry name" value="Leu-rich_rpt_typical-subtyp"/>
</dbReference>
<dbReference type="InterPro" id="IPR032675">
    <property type="entry name" value="LRR_dom_sf"/>
</dbReference>
<dbReference type="InterPro" id="IPR013210">
    <property type="entry name" value="LRR_N_plant-typ"/>
</dbReference>
<dbReference type="InterPro" id="IPR055414">
    <property type="entry name" value="LRR_R13L4/SHOC2-like"/>
</dbReference>
<dbReference type="InterPro" id="IPR000719">
    <property type="entry name" value="Prot_kinase_dom"/>
</dbReference>
<dbReference type="InterPro" id="IPR017441">
    <property type="entry name" value="Protein_kinase_ATP_BS"/>
</dbReference>
<dbReference type="InterPro" id="IPR008271">
    <property type="entry name" value="Ser/Thr_kinase_AS"/>
</dbReference>
<dbReference type="PANTHER" id="PTHR27000">
    <property type="entry name" value="LEUCINE-RICH REPEAT RECEPTOR-LIKE PROTEIN KINASE FAMILY PROTEIN-RELATED"/>
    <property type="match status" value="1"/>
</dbReference>
<dbReference type="PANTHER" id="PTHR27000:SF444">
    <property type="entry name" value="LRR RECEPTOR-LIKE SERINE_THREONINE-PROTEIN KINASE GSO1"/>
    <property type="match status" value="1"/>
</dbReference>
<dbReference type="Pfam" id="PF00560">
    <property type="entry name" value="LRR_1"/>
    <property type="match status" value="7"/>
</dbReference>
<dbReference type="Pfam" id="PF23598">
    <property type="entry name" value="LRR_14"/>
    <property type="match status" value="1"/>
</dbReference>
<dbReference type="Pfam" id="PF13855">
    <property type="entry name" value="LRR_8"/>
    <property type="match status" value="3"/>
</dbReference>
<dbReference type="Pfam" id="PF08263">
    <property type="entry name" value="LRRNT_2"/>
    <property type="match status" value="1"/>
</dbReference>
<dbReference type="Pfam" id="PF00069">
    <property type="entry name" value="Pkinase"/>
    <property type="match status" value="1"/>
</dbReference>
<dbReference type="PRINTS" id="PR00019">
    <property type="entry name" value="LEURICHRPT"/>
</dbReference>
<dbReference type="SMART" id="SM00365">
    <property type="entry name" value="LRR_SD22"/>
    <property type="match status" value="5"/>
</dbReference>
<dbReference type="SMART" id="SM00369">
    <property type="entry name" value="LRR_TYP"/>
    <property type="match status" value="16"/>
</dbReference>
<dbReference type="SMART" id="SM00220">
    <property type="entry name" value="S_TKc"/>
    <property type="match status" value="1"/>
</dbReference>
<dbReference type="SUPFAM" id="SSF52058">
    <property type="entry name" value="L domain-like"/>
    <property type="match status" value="2"/>
</dbReference>
<dbReference type="SUPFAM" id="SSF56112">
    <property type="entry name" value="Protein kinase-like (PK-like)"/>
    <property type="match status" value="1"/>
</dbReference>
<dbReference type="SUPFAM" id="SSF52047">
    <property type="entry name" value="RNI-like"/>
    <property type="match status" value="1"/>
</dbReference>
<dbReference type="PROSITE" id="PS00107">
    <property type="entry name" value="PROTEIN_KINASE_ATP"/>
    <property type="match status" value="1"/>
</dbReference>
<dbReference type="PROSITE" id="PS50011">
    <property type="entry name" value="PROTEIN_KINASE_DOM"/>
    <property type="match status" value="1"/>
</dbReference>
<dbReference type="PROSITE" id="PS00108">
    <property type="entry name" value="PROTEIN_KINASE_ST"/>
    <property type="match status" value="1"/>
</dbReference>
<evidence type="ECO:0000250" key="1">
    <source>
        <dbReference type="UniProtKB" id="C0LGT6"/>
    </source>
</evidence>
<evidence type="ECO:0000250" key="2">
    <source>
        <dbReference type="UniProtKB" id="O22476"/>
    </source>
</evidence>
<evidence type="ECO:0000250" key="3">
    <source>
        <dbReference type="UniProtKB" id="Q9M0G7"/>
    </source>
</evidence>
<evidence type="ECO:0000255" key="4"/>
<evidence type="ECO:0000255" key="5">
    <source>
        <dbReference type="PROSITE-ProRule" id="PRU00159"/>
    </source>
</evidence>
<evidence type="ECO:0000255" key="6">
    <source>
        <dbReference type="PROSITE-ProRule" id="PRU00498"/>
    </source>
</evidence>
<evidence type="ECO:0000269" key="7">
    <source>
    </source>
</evidence>
<evidence type="ECO:0000269" key="8">
    <source>
    </source>
</evidence>
<evidence type="ECO:0000269" key="9">
    <source>
    </source>
</evidence>
<evidence type="ECO:0000269" key="10">
    <source>
    </source>
</evidence>
<evidence type="ECO:0000303" key="11">
    <source>
    </source>
</evidence>
<evidence type="ECO:0000303" key="12">
    <source>
    </source>
</evidence>
<evidence type="ECO:0000305" key="13"/>
<evidence type="ECO:0000312" key="14">
    <source>
        <dbReference type="Araport" id="AT4G20140"/>
    </source>
</evidence>
<evidence type="ECO:0000312" key="15">
    <source>
        <dbReference type="EMBL" id="CAA18239.1"/>
    </source>
</evidence>
<evidence type="ECO:0007829" key="16">
    <source>
        <dbReference type="PDB" id="6S6Q"/>
    </source>
</evidence>
<comment type="function">
    <text evidence="7 8 9 10">Together with GSO2, receptor-like serine/threonine-kinase required during the development of the epidermal surface in embryos and cotyledons (PubMed:18088309). In coordination with GSO2, regulates root growth through control of cell division and cell fate specification. Controls seedling root growth by modulating sucrose response after germination (PubMed:24123341). Receptor of the peptide hormones CIF1 and CIF2 required for contiguous Casparian strip diffusion barrier formation in roots (PubMed:28104889). Required for localizing CASP proteins into the Casparian strip following an uninterrupted, ring-like domain, to trigger endodermal differentiation and thus regulate potassium ion (K) homeostasis. Involved in the maintenance of water transport and root pressure. May also be involved in the regulation of suberin accumulation in the endodermis (PubMed:25233277).</text>
</comment>
<comment type="catalytic activity">
    <reaction evidence="5">
        <text>L-seryl-[protein] + ATP = O-phospho-L-seryl-[protein] + ADP + H(+)</text>
        <dbReference type="Rhea" id="RHEA:17989"/>
        <dbReference type="Rhea" id="RHEA-COMP:9863"/>
        <dbReference type="Rhea" id="RHEA-COMP:11604"/>
        <dbReference type="ChEBI" id="CHEBI:15378"/>
        <dbReference type="ChEBI" id="CHEBI:29999"/>
        <dbReference type="ChEBI" id="CHEBI:30616"/>
        <dbReference type="ChEBI" id="CHEBI:83421"/>
        <dbReference type="ChEBI" id="CHEBI:456216"/>
        <dbReference type="EC" id="2.7.11.1"/>
    </reaction>
</comment>
<comment type="catalytic activity">
    <reaction evidence="5">
        <text>L-threonyl-[protein] + ATP = O-phospho-L-threonyl-[protein] + ADP + H(+)</text>
        <dbReference type="Rhea" id="RHEA:46608"/>
        <dbReference type="Rhea" id="RHEA-COMP:11060"/>
        <dbReference type="Rhea" id="RHEA-COMP:11605"/>
        <dbReference type="ChEBI" id="CHEBI:15378"/>
        <dbReference type="ChEBI" id="CHEBI:30013"/>
        <dbReference type="ChEBI" id="CHEBI:30616"/>
        <dbReference type="ChEBI" id="CHEBI:61977"/>
        <dbReference type="ChEBI" id="CHEBI:456216"/>
        <dbReference type="EC" id="2.7.11.1"/>
    </reaction>
</comment>
<comment type="subunit">
    <text evidence="10">Interacts with CIF1 and CIF2.</text>
</comment>
<comment type="interaction">
    <interactant intactId="EBI-16905069">
        <id>C0LGQ5</id>
    </interactant>
    <interactant intactId="EBI-20654480">
        <id>C0LGR6</id>
        <label>At4g29180</label>
    </interactant>
    <organismsDiffer>false</organismsDiffer>
    <experiments>2</experiments>
</comment>
<comment type="interaction">
    <interactant intactId="EBI-16905069">
        <id>C0LGQ5</id>
    </interactant>
    <interactant intactId="EBI-16902452">
        <id>Q8VYT3</id>
        <label>At4g30520</label>
    </interactant>
    <organismsDiffer>false</organismsDiffer>
    <experiments>2</experiments>
</comment>
<comment type="interaction">
    <interactant intactId="EBI-16905069">
        <id>C0LGQ5</id>
    </interactant>
    <interactant intactId="EBI-16940407">
        <id>Q42371</id>
        <label>ERECTA</label>
    </interactant>
    <organismsDiffer>false</organismsDiffer>
    <experiments>3</experiments>
</comment>
<comment type="interaction">
    <interactant intactId="EBI-16905069">
        <id>C0LGQ5</id>
    </interactant>
    <interactant intactId="EBI-17071528">
        <id>Q9FRI1</id>
        <label>LRR-RLK</label>
    </interactant>
    <organismsDiffer>false</organismsDiffer>
    <experiments>3</experiments>
</comment>
<comment type="interaction">
    <interactant intactId="EBI-16905069">
        <id>C0LGQ5</id>
    </interactant>
    <interactant intactId="EBI-17121474">
        <id>Q93ZS4</id>
        <label>NIK3</label>
    </interactant>
    <organismsDiffer>false</organismsDiffer>
    <experiments>2</experiments>
</comment>
<comment type="interaction">
    <interactant intactId="EBI-16905069">
        <id>C0LGQ5</id>
    </interactant>
    <interactant intactId="EBI-20652612">
        <id>Q9FZ59</id>
        <label>PEPR2</label>
    </interactant>
    <organismsDiffer>false</organismsDiffer>
    <experiments>2</experiments>
</comment>
<comment type="interaction">
    <interactant intactId="EBI-16905069">
        <id>C0LGQ5</id>
    </interactant>
    <interactant intactId="EBI-1238200">
        <id>Q9LZV7</id>
        <label>PXC2</label>
    </interactant>
    <organismsDiffer>false</organismsDiffer>
    <experiments>2</experiments>
</comment>
<comment type="interaction">
    <interactant intactId="EBI-16905069">
        <id>C0LGQ5</id>
    </interactant>
    <interactant intactId="EBI-16887868">
        <id>Q8LPS5</id>
        <label>SERK5</label>
    </interactant>
    <organismsDiffer>false</organismsDiffer>
    <experiments>2</experiments>
</comment>
<comment type="interaction">
    <interactant intactId="EBI-16905069">
        <id>C0LGQ5</id>
    </interactant>
    <interactant intactId="EBI-16905883">
        <id>Q9SKB2</id>
        <label>SOBIR1</label>
    </interactant>
    <organismsDiffer>false</organismsDiffer>
    <experiments>2</experiments>
</comment>
<comment type="interaction">
    <interactant intactId="EBI-16905069">
        <id>C0LGQ5</id>
    </interactant>
    <interactant intactId="EBI-16955764">
        <id>Q06BH3</id>
        <label>SRF1</label>
    </interactant>
    <organismsDiffer>false</organismsDiffer>
    <experiments>2</experiments>
</comment>
<comment type="interaction">
    <interactant intactId="EBI-16905069">
        <id>C0LGQ5</id>
    </interactant>
    <interactant intactId="EBI-20651925">
        <id>Q6R2K3</id>
        <label>SRF3</label>
    </interactant>
    <organismsDiffer>false</organismsDiffer>
    <experiments>2</experiments>
</comment>
<comment type="interaction">
    <interactant intactId="EBI-16905069">
        <id>C0LGQ5</id>
    </interactant>
    <interactant intactId="EBI-16964596">
        <id>Q9LUL4</id>
        <label>SRF7</label>
    </interactant>
    <organismsDiffer>false</organismsDiffer>
    <experiments>2</experiments>
</comment>
<comment type="interaction">
    <interactant intactId="EBI-16905069">
        <id>C0LGQ5</id>
    </interactant>
    <interactant intactId="EBI-20657109">
        <id>Q9M2R4</id>
        <label>T10K17.40</label>
    </interactant>
    <organismsDiffer>false</organismsDiffer>
    <experiments>3</experiments>
</comment>
<comment type="interaction">
    <interactant intactId="EBI-16905069">
        <id>C0LGQ5</id>
    </interactant>
    <interactant intactId="EBI-2023970">
        <id>P43298</id>
        <label>TMK1</label>
    </interactant>
    <organismsDiffer>false</organismsDiffer>
    <experiments>2</experiments>
</comment>
<comment type="subcellular location">
    <subcellularLocation>
        <location evidence="9">Cell membrane</location>
        <topology evidence="4">Single-pass type I membrane protein</topology>
    </subcellularLocation>
    <text evidence="9">Localized into a broader band at the endodermal plasma membrane, embedding growing CASP microdomains. In endodermal cells, first observed on all cell sides, but quickly relocated in the transversal and anticlinal sides of the plasma membrane, but excluded from the Casparian strip membrane domain (CSD).</text>
</comment>
<comment type="tissue specificity">
    <text evidence="7">Mostly expressed in siliques, seeds, developing embryos and seedlings, detected in flower buds and roots, but not in leaves or stems.</text>
</comment>
<comment type="developmental stage">
    <text evidence="7 8 9">In flower buds, localized in filaments and stigmas. During embryogenesis, uniform expression from the globular embryo to the mature cotyledonary embryo. After germination, detected in whole cotyledons and in the hypocotyl. During the 6 first days after germination (DAG), highly expressed in roots throughout the elongation zone (EZ) and differentiation zone, but restricted to the endodermis and vasculature. Accumulates progressively in the quiescent center (QC). Down-regulated at sites of lateral root primordia (LRP) initiation. Absent at sites of deliberate wounding in the root. Mostly observed in the inner layers of the mature root, the QC and shoot apical meristem (SAM) (PubMed:24123341). Expressed early during endodermal differentiation, shortly after the onset of endodermal cells elongation (PubMed:25233277).</text>
</comment>
<comment type="induction">
    <text evidence="8">Repressed by wounding.</text>
</comment>
<comment type="disruption phenotype">
    <text evidence="7 8 9 10">Dramatic defect in endodermal barrier formation leading to altered potassium ion (K) homeostasis and hypersensitivity to low potassium conditions. Casparian strips are repeatedly interrupted, forming irregularly-sized holes of several micrometer in length, probably due to abnormal CASP proteins patterning. Suppresses the enhanced suberin production when combined to other Casparian strip-defective mutants such as esb1 and casp1 casp3. Extremely sensitive to changes in environmental conditions such as high temperatures and under long-day (LD) conditions leading to dwarf plants. Normal transpiration but altered water transport and root pressure (PubMed:25233277). No visible phenotype during embryogenesis and seedling development. Gso1 and gso2 double mutants produce slightly contorted seeds, with abnormally shaped embryos and seedlings; adhesion between cotyledons and the peripheral tissue of the endosperm, short hypocotyl, and concave cotyledons sometimes fused, with compressed epidermal cells, endosperm tissue partially adherent to the surface of the cotyledons, and a rough surface. In addition, seedlings of gso1 gso2 have also root growth and patterning defects characterized by abnormal numbers of cells in longitudinal files and radial cell layers, as well as aberrant stem cell division planes. Root growth arrest and cell divisions defects are rescued by exogenous application of sucrose, but not patterning defects (PubMed:24123341). The double mutant gso1 gso2 exhibits a repeatedly interrupted, discontinuous Casparian strip due to patch-like localization of the CASPs proteins as a result of partial fusion of individual CASP containing islands in the Casparian strip membrane domain (CSD) (PubMed:28104889).</text>
</comment>
<comment type="similarity">
    <text evidence="5">Belongs to the protein kinase superfamily. Ser/Thr protein kinase family.</text>
</comment>
<comment type="sequence caution" evidence="13">
    <conflict type="erroneous gene model prediction">
        <sequence resource="EMBL-CDS" id="CAA18239"/>
    </conflict>
</comment>
<comment type="sequence caution" evidence="13">
    <conflict type="erroneous gene model prediction">
        <sequence resource="EMBL-CDS" id="CAB79014"/>
    </conflict>
</comment>
<sequence>MQPLVLLLLFILCFSGLGQPGIINNDLQTLLEVKKSLVTNPQEDDPLRQWNSDNINYCSWTGVTCDNTGLFRVIALNLTGLGLTGSISPWFGRFDNLIHLDLSSNNLVGPIPTALSNLTSLESLFLFSNQLTGEIPSQLGSLVNIRSLRIGDNELVGDIPETLGNLVNLQMLALASCRLTGPIPSQLGRLVRVQSLILQDNYLEGPIPAELGNCSDLTVFTAAENMLNGTIPAELGRLENLEILNLANNSLTGEIPSQLGEMSQLQYLSLMANQLQGLIPKSLADLGNLQTLDLSANNLTGEIPEEFWNMSQLLDLVLANNHLSGSLPKSICSNNTNLEQLVLSGTQLSGEIPVELSKCQSLKQLDLSNNSLAGSIPEALFELVELTDLYLHNNTLEGTLSPSISNLTNLQWLVLYHNNLEGKLPKEISALRKLEVLFLYENRFSGEIPQEIGNCTSLKMIDMFGNHFEGEIPPSIGRLKELNLLHLRQNELVGGLPASLGNCHQLNILDLADNQLSGSIPSSFGFLKGLEQLMLYNNSLQGNLPDSLISLRNLTRINLSHNRLNGTIHPLCGSSSYLSFDVTNNGFEDEIPLELGNSQNLDRLRLGKNQLTGKIPWTLGKIRELSLLDMSSNALTGTIPLQLVLCKKLTHIDLNNNFLSGPIPPWLGKLSQLGELKLSSNQFVESLPTELFNCTKLLVLSLDGNSLNGSIPQEIGNLGALNVLNLDKNQFSGSLPQAMGKLSKLYELRLSRNSLTGEIPVEIGQLQDLQSALDLSYNNFTGDIPSTIGTLSKLETLDLSHNQLTGEVPGSVGDMKSLGYLNVSFNNLGGKLKKQFSRWPADSFLGNTGLCGSPLSRCNRVRSNNKQQGLSARSVVIISAISALTAIGLMILVIALFFKQRHDFFKKVGHGSTAYTSSSSSSQATHKPLFRNGASKSDIRWEDIMEATHNLSEEFMIGSGGSGKVYKAELENGETVAVKKILWKDDLMSNKSFSREVKTLGRIRHRHLVKLMGYCSSKSEGLNLLIYEYMKNGSIWDWLHEDKPVLEKKKKLLDWEARLRIAVGLAQGVEYLHHDCVPPIVHRDIKSSNVLLDSNMEAHLGDFGLAKVLTENCDTNTDSNTWFACSYGYIAPEYAYSLKATEKSDVYSMGIVLMEIVTGKMPTDSVFGAEMDMVRWVETHLEVAGSARDKLIDPKLKPLLPFEEDAACQVLEIALQCTKTSPQERPSSRQACDSLLHVYNNRTAGYKKL</sequence>
<keyword id="KW-0002">3D-structure</keyword>
<keyword id="KW-0067">ATP-binding</keyword>
<keyword id="KW-1003">Cell membrane</keyword>
<keyword id="KW-0961">Cell wall biogenesis/degradation</keyword>
<keyword id="KW-0217">Developmental protein</keyword>
<keyword id="KW-0325">Glycoprotein</keyword>
<keyword id="KW-0418">Kinase</keyword>
<keyword id="KW-0433">Leucine-rich repeat</keyword>
<keyword id="KW-0472">Membrane</keyword>
<keyword id="KW-0547">Nucleotide-binding</keyword>
<keyword id="KW-0597">Phosphoprotein</keyword>
<keyword id="KW-0675">Receptor</keyword>
<keyword id="KW-1185">Reference proteome</keyword>
<keyword id="KW-0677">Repeat</keyword>
<keyword id="KW-0723">Serine/threonine-protein kinase</keyword>
<keyword id="KW-0732">Signal</keyword>
<keyword id="KW-0808">Transferase</keyword>
<keyword id="KW-0812">Transmembrane</keyword>
<keyword id="KW-1133">Transmembrane helix</keyword>
<proteinExistence type="evidence at protein level"/>
<gene>
    <name evidence="11" type="primary">GSO1</name>
    <name evidence="12" type="synonym">SGN3</name>
    <name evidence="14" type="ordered locus">At4g20140</name>
    <name evidence="15" type="ORF">F1C12.60</name>
</gene>
<reference key="1">
    <citation type="journal article" date="1999" name="Nature">
        <title>Sequence and analysis of chromosome 4 of the plant Arabidopsis thaliana.</title>
        <authorList>
            <person name="Mayer K.F.X."/>
            <person name="Schueller C."/>
            <person name="Wambutt R."/>
            <person name="Murphy G."/>
            <person name="Volckaert G."/>
            <person name="Pohl T."/>
            <person name="Duesterhoeft A."/>
            <person name="Stiekema W."/>
            <person name="Entian K.-D."/>
            <person name="Terryn N."/>
            <person name="Harris B."/>
            <person name="Ansorge W."/>
            <person name="Brandt P."/>
            <person name="Grivell L.A."/>
            <person name="Rieger M."/>
            <person name="Weichselgartner M."/>
            <person name="de Simone V."/>
            <person name="Obermaier B."/>
            <person name="Mache R."/>
            <person name="Mueller M."/>
            <person name="Kreis M."/>
            <person name="Delseny M."/>
            <person name="Puigdomenech P."/>
            <person name="Watson M."/>
            <person name="Schmidtheini T."/>
            <person name="Reichert B."/>
            <person name="Portetelle D."/>
            <person name="Perez-Alonso M."/>
            <person name="Boutry M."/>
            <person name="Bancroft I."/>
            <person name="Vos P."/>
            <person name="Hoheisel J."/>
            <person name="Zimmermann W."/>
            <person name="Wedler H."/>
            <person name="Ridley P."/>
            <person name="Langham S.-A."/>
            <person name="McCullagh B."/>
            <person name="Bilham L."/>
            <person name="Robben J."/>
            <person name="van der Schueren J."/>
            <person name="Grymonprez B."/>
            <person name="Chuang Y.-J."/>
            <person name="Vandenbussche F."/>
            <person name="Braeken M."/>
            <person name="Weltjens I."/>
            <person name="Voet M."/>
            <person name="Bastiaens I."/>
            <person name="Aert R."/>
            <person name="Defoor E."/>
            <person name="Weitzenegger T."/>
            <person name="Bothe G."/>
            <person name="Ramsperger U."/>
            <person name="Hilbert H."/>
            <person name="Braun M."/>
            <person name="Holzer E."/>
            <person name="Brandt A."/>
            <person name="Peters S."/>
            <person name="van Staveren M."/>
            <person name="Dirkse W."/>
            <person name="Mooijman P."/>
            <person name="Klein Lankhorst R."/>
            <person name="Rose M."/>
            <person name="Hauf J."/>
            <person name="Koetter P."/>
            <person name="Berneiser S."/>
            <person name="Hempel S."/>
            <person name="Feldpausch M."/>
            <person name="Lamberth S."/>
            <person name="Van den Daele H."/>
            <person name="De Keyser A."/>
            <person name="Buysshaert C."/>
            <person name="Gielen J."/>
            <person name="Villarroel R."/>
            <person name="De Clercq R."/>
            <person name="van Montagu M."/>
            <person name="Rogers J."/>
            <person name="Cronin A."/>
            <person name="Quail M.A."/>
            <person name="Bray-Allen S."/>
            <person name="Clark L."/>
            <person name="Doggett J."/>
            <person name="Hall S."/>
            <person name="Kay M."/>
            <person name="Lennard N."/>
            <person name="McLay K."/>
            <person name="Mayes R."/>
            <person name="Pettett A."/>
            <person name="Rajandream M.A."/>
            <person name="Lyne M."/>
            <person name="Benes V."/>
            <person name="Rechmann S."/>
            <person name="Borkova D."/>
            <person name="Bloecker H."/>
            <person name="Scharfe M."/>
            <person name="Grimm M."/>
            <person name="Loehnert T.-H."/>
            <person name="Dose S."/>
            <person name="de Haan M."/>
            <person name="Maarse A.C."/>
            <person name="Schaefer M."/>
            <person name="Mueller-Auer S."/>
            <person name="Gabel C."/>
            <person name="Fuchs M."/>
            <person name="Fartmann B."/>
            <person name="Granderath K."/>
            <person name="Dauner D."/>
            <person name="Herzl A."/>
            <person name="Neumann S."/>
            <person name="Argiriou A."/>
            <person name="Vitale D."/>
            <person name="Liguori R."/>
            <person name="Piravandi E."/>
            <person name="Massenet O."/>
            <person name="Quigley F."/>
            <person name="Clabauld G."/>
            <person name="Muendlein A."/>
            <person name="Felber R."/>
            <person name="Schnabl S."/>
            <person name="Hiller R."/>
            <person name="Schmidt W."/>
            <person name="Lecharny A."/>
            <person name="Aubourg S."/>
            <person name="Chefdor F."/>
            <person name="Cooke R."/>
            <person name="Berger C."/>
            <person name="Monfort A."/>
            <person name="Casacuberta E."/>
            <person name="Gibbons T."/>
            <person name="Weber N."/>
            <person name="Vandenbol M."/>
            <person name="Bargues M."/>
            <person name="Terol J."/>
            <person name="Torres A."/>
            <person name="Perez-Perez A."/>
            <person name="Purnelle B."/>
            <person name="Bent E."/>
            <person name="Johnson S."/>
            <person name="Tacon D."/>
            <person name="Jesse T."/>
            <person name="Heijnen L."/>
            <person name="Schwarz S."/>
            <person name="Scholler P."/>
            <person name="Heber S."/>
            <person name="Francs P."/>
            <person name="Bielke C."/>
            <person name="Frishman D."/>
            <person name="Haase D."/>
            <person name="Lemcke K."/>
            <person name="Mewes H.-W."/>
            <person name="Stocker S."/>
            <person name="Zaccaria P."/>
            <person name="Bevan M."/>
            <person name="Wilson R.K."/>
            <person name="de la Bastide M."/>
            <person name="Habermann K."/>
            <person name="Parnell L."/>
            <person name="Dedhia N."/>
            <person name="Gnoj L."/>
            <person name="Schutz K."/>
            <person name="Huang E."/>
            <person name="Spiegel L."/>
            <person name="Sekhon M."/>
            <person name="Murray J."/>
            <person name="Sheet P."/>
            <person name="Cordes M."/>
            <person name="Abu-Threideh J."/>
            <person name="Stoneking T."/>
            <person name="Kalicki J."/>
            <person name="Graves T."/>
            <person name="Harmon G."/>
            <person name="Edwards J."/>
            <person name="Latreille P."/>
            <person name="Courtney L."/>
            <person name="Cloud J."/>
            <person name="Abbott A."/>
            <person name="Scott K."/>
            <person name="Johnson D."/>
            <person name="Minx P."/>
            <person name="Bentley D."/>
            <person name="Fulton B."/>
            <person name="Miller N."/>
            <person name="Greco T."/>
            <person name="Kemp K."/>
            <person name="Kramer J."/>
            <person name="Fulton L."/>
            <person name="Mardis E."/>
            <person name="Dante M."/>
            <person name="Pepin K."/>
            <person name="Hillier L.W."/>
            <person name="Nelson J."/>
            <person name="Spieth J."/>
            <person name="Ryan E."/>
            <person name="Andrews S."/>
            <person name="Geisel C."/>
            <person name="Layman D."/>
            <person name="Du H."/>
            <person name="Ali J."/>
            <person name="Berghoff A."/>
            <person name="Jones K."/>
            <person name="Drone K."/>
            <person name="Cotton M."/>
            <person name="Joshu C."/>
            <person name="Antonoiu B."/>
            <person name="Zidanic M."/>
            <person name="Strong C."/>
            <person name="Sun H."/>
            <person name="Lamar B."/>
            <person name="Yordan C."/>
            <person name="Ma P."/>
            <person name="Zhong J."/>
            <person name="Preston R."/>
            <person name="Vil D."/>
            <person name="Shekher M."/>
            <person name="Matero A."/>
            <person name="Shah R."/>
            <person name="Swaby I.K."/>
            <person name="O'Shaughnessy A."/>
            <person name="Rodriguez M."/>
            <person name="Hoffman J."/>
            <person name="Till S."/>
            <person name="Granat S."/>
            <person name="Shohdy N."/>
            <person name="Hasegawa A."/>
            <person name="Hameed A."/>
            <person name="Lodhi M."/>
            <person name="Johnson A."/>
            <person name="Chen E."/>
            <person name="Marra M.A."/>
            <person name="Martienssen R."/>
            <person name="McCombie W.R."/>
        </authorList>
    </citation>
    <scope>NUCLEOTIDE SEQUENCE [LARGE SCALE GENOMIC DNA]</scope>
    <source>
        <strain>cv. Columbia</strain>
    </source>
</reference>
<reference key="2">
    <citation type="journal article" date="2017" name="Plant J.">
        <title>Araport11: a complete reannotation of the Arabidopsis thaliana reference genome.</title>
        <authorList>
            <person name="Cheng C.Y."/>
            <person name="Krishnakumar V."/>
            <person name="Chan A.P."/>
            <person name="Thibaud-Nissen F."/>
            <person name="Schobel S."/>
            <person name="Town C.D."/>
        </authorList>
    </citation>
    <scope>GENOME REANNOTATION</scope>
    <source>
        <strain>cv. Columbia</strain>
    </source>
</reference>
<reference key="3">
    <citation type="journal article" date="2010" name="BMC Genomics">
        <title>Genome-wide cloning and sequence analysis of leucine-rich repeat receptor-like protein kinase genes in Arabidopsis thaliana.</title>
        <authorList>
            <person name="Gou X."/>
            <person name="He K."/>
            <person name="Yang H."/>
            <person name="Yuan T."/>
            <person name="Lin H."/>
            <person name="Clouse S.D."/>
            <person name="Li J."/>
        </authorList>
    </citation>
    <scope>NUCLEOTIDE SEQUENCE [LARGE SCALE MRNA]</scope>
    <source>
        <strain>cv. Columbia</strain>
    </source>
</reference>
<reference key="4">
    <citation type="journal article" date="2008" name="Plant J.">
        <title>GASSHO1 and GASSHO2 encoding a putative leucine-rich repeat transmembrane-type receptor kinase are essential for the normal development of the epidermal surface in Arabidopsis embryos.</title>
        <authorList>
            <person name="Tsuwamoto R."/>
            <person name="Fukuoka H."/>
            <person name="Takahata Y."/>
        </authorList>
    </citation>
    <scope>FUNCTION</scope>
    <scope>DISRUPTION PHENOTYPE</scope>
    <scope>DEVELOPMENTAL STAGE</scope>
    <scope>TISSUE SPECIFICITY</scope>
</reference>
<reference key="5">
    <citation type="journal article" date="2014" name="Dev. Dyn.">
        <title>The receptor-like kinases GSO1 and GSO2 together regulate root growth in Arabidopsis through control of cell division and cell fate specification.</title>
        <authorList>
            <person name="Racolta A."/>
            <person name="Bryan A.C."/>
            <person name="Tax F.E."/>
        </authorList>
    </citation>
    <scope>FUNCTION</scope>
    <scope>DISRUPTION PHENOTYPE</scope>
    <scope>DEVELOPMENTAL STAGE</scope>
    <scope>REPRESSION BY WOUNDING</scope>
    <source>
        <strain>cv. Columbia</strain>
    </source>
</reference>
<reference key="6">
    <citation type="journal article" date="2014" name="Elife">
        <title>A receptor-like kinase mutant with absent endodermal diffusion barrier displays selective nutrient homeostasis defects.</title>
        <authorList>
            <person name="Pfister A."/>
            <person name="Barberon M."/>
            <person name="Alassimone J."/>
            <person name="Kalmbach L."/>
            <person name="Lee Y."/>
            <person name="Vermeer J.E."/>
            <person name="Yamazaki M."/>
            <person name="Li G."/>
            <person name="Maurel C."/>
            <person name="Takano J."/>
            <person name="Kamiya T."/>
            <person name="Salt D.E."/>
            <person name="Roppolo D."/>
            <person name="Geldner N."/>
        </authorList>
    </citation>
    <scope>FUNCTION</scope>
    <scope>DISRUPTION PHENOTYPE</scope>
    <scope>MUTAGENESIS OF PRO-160; GLY-287; GLY-719; GLY-1101 AND GLY-1150</scope>
    <scope>SUBCELLULAR LOCATION</scope>
    <scope>DEVELOPMENTAL STAGE</scope>
    <source>
        <strain>cv. Columbia</strain>
    </source>
</reference>
<reference key="7">
    <citation type="journal article" date="2017" name="Science">
        <title>A peptide hormone required for Casparian strip diffusion barrier formation in Arabidopsis roots.</title>
        <authorList>
            <person name="Nakayama T."/>
            <person name="Shinohara H."/>
            <person name="Tanaka M."/>
            <person name="Baba K."/>
            <person name="Ogawa-Ohnishi M."/>
            <person name="Matsubayashi Y."/>
        </authorList>
    </citation>
    <scope>FUNCTION</scope>
    <scope>DISRUPTION PHENOTYPE</scope>
    <scope>INTERACTION WITH CIF1 AND CIF2</scope>
</reference>
<organism>
    <name type="scientific">Arabidopsis thaliana</name>
    <name type="common">Mouse-ear cress</name>
    <dbReference type="NCBI Taxonomy" id="3702"/>
    <lineage>
        <taxon>Eukaryota</taxon>
        <taxon>Viridiplantae</taxon>
        <taxon>Streptophyta</taxon>
        <taxon>Embryophyta</taxon>
        <taxon>Tracheophyta</taxon>
        <taxon>Spermatophyta</taxon>
        <taxon>Magnoliopsida</taxon>
        <taxon>eudicotyledons</taxon>
        <taxon>Gunneridae</taxon>
        <taxon>Pentapetalae</taxon>
        <taxon>rosids</taxon>
        <taxon>malvids</taxon>
        <taxon>Brassicales</taxon>
        <taxon>Brassicaceae</taxon>
        <taxon>Camelineae</taxon>
        <taxon>Arabidopsis</taxon>
    </lineage>
</organism>
<name>GSO1_ARATH</name>
<protein>
    <recommendedName>
        <fullName evidence="11">LRR receptor-like serine/threonine-protein kinase GSO1</fullName>
        <ecNumber evidence="5">2.7.11.1</ecNumber>
    </recommendedName>
    <alternativeName>
        <fullName evidence="11">Protein GASSHO 1</fullName>
    </alternativeName>
    <alternativeName>
        <fullName evidence="12">Protein SCHENGEN 3</fullName>
    </alternativeName>
</protein>
<feature type="signal peptide" evidence="4">
    <location>
        <begin position="1"/>
        <end position="18"/>
    </location>
</feature>
<feature type="chain" id="PRO_0000387513" description="LRR receptor-like serine/threonine-protein kinase GSO1">
    <location>
        <begin position="19"/>
        <end position="1249"/>
    </location>
</feature>
<feature type="topological domain" description="Extracellular" evidence="4">
    <location>
        <begin position="19"/>
        <end position="876"/>
    </location>
</feature>
<feature type="transmembrane region" description="Helical" evidence="4">
    <location>
        <begin position="877"/>
        <end position="897"/>
    </location>
</feature>
<feature type="topological domain" description="Cytoplasmic" evidence="4">
    <location>
        <begin position="898"/>
        <end position="1249"/>
    </location>
</feature>
<feature type="repeat" description="LRR 1" evidence="4">
    <location>
        <begin position="94"/>
        <end position="118"/>
    </location>
</feature>
<feature type="repeat" description="LRR 2" evidence="4">
    <location>
        <begin position="119"/>
        <end position="142"/>
    </location>
</feature>
<feature type="repeat" description="LRR 3" evidence="4">
    <location>
        <begin position="144"/>
        <end position="166"/>
    </location>
</feature>
<feature type="repeat" description="LRR 4" evidence="4">
    <location>
        <begin position="168"/>
        <end position="190"/>
    </location>
</feature>
<feature type="repeat" description="LRR 5" evidence="4">
    <location>
        <begin position="191"/>
        <end position="214"/>
    </location>
</feature>
<feature type="repeat" description="LRR 6" evidence="4">
    <location>
        <begin position="216"/>
        <end position="238"/>
    </location>
</feature>
<feature type="repeat" description="LRR 7" evidence="4">
    <location>
        <begin position="239"/>
        <end position="262"/>
    </location>
</feature>
<feature type="repeat" description="LRR 8" evidence="4">
    <location>
        <begin position="264"/>
        <end position="285"/>
    </location>
</feature>
<feature type="repeat" description="LRR 9" evidence="4">
    <location>
        <begin position="286"/>
        <end position="310"/>
    </location>
</feature>
<feature type="repeat" description="LRR 10" evidence="4">
    <location>
        <begin position="312"/>
        <end position="334"/>
    </location>
</feature>
<feature type="repeat" description="LRR 11" evidence="4">
    <location>
        <begin position="336"/>
        <end position="359"/>
    </location>
</feature>
<feature type="repeat" description="LRR 12" evidence="4">
    <location>
        <begin position="360"/>
        <end position="383"/>
    </location>
</feature>
<feature type="repeat" description="LRR 13" evidence="4">
    <location>
        <begin position="385"/>
        <end position="407"/>
    </location>
</feature>
<feature type="repeat" description="LRR 14" evidence="4">
    <location>
        <begin position="408"/>
        <end position="431"/>
    </location>
</feature>
<feature type="repeat" description="LRR 15" evidence="4">
    <location>
        <begin position="433"/>
        <end position="455"/>
    </location>
</feature>
<feature type="repeat" description="LRR 16" evidence="4">
    <location>
        <begin position="457"/>
        <end position="479"/>
    </location>
</feature>
<feature type="repeat" description="LRR 17" evidence="4">
    <location>
        <begin position="480"/>
        <end position="503"/>
    </location>
</feature>
<feature type="repeat" description="LRR 18" evidence="4">
    <location>
        <begin position="505"/>
        <end position="527"/>
    </location>
</feature>
<feature type="repeat" description="LRR 19" evidence="4">
    <location>
        <begin position="528"/>
        <end position="551"/>
    </location>
</feature>
<feature type="repeat" description="LRR 20" evidence="4">
    <location>
        <begin position="553"/>
        <end position="574"/>
    </location>
</feature>
<feature type="repeat" description="LRR 21" evidence="4">
    <location>
        <begin position="576"/>
        <end position="598"/>
    </location>
</feature>
<feature type="repeat" description="LRR 22" evidence="4">
    <location>
        <begin position="599"/>
        <end position="622"/>
    </location>
</feature>
<feature type="repeat" description="LRR 23" evidence="4">
    <location>
        <begin position="623"/>
        <end position="646"/>
    </location>
</feature>
<feature type="repeat" description="LRR 24" evidence="4">
    <location>
        <begin position="648"/>
        <end position="670"/>
    </location>
</feature>
<feature type="repeat" description="LRR 25" evidence="4">
    <location>
        <begin position="671"/>
        <end position="694"/>
    </location>
</feature>
<feature type="repeat" description="LRR 26" evidence="4">
    <location>
        <begin position="696"/>
        <end position="718"/>
    </location>
</feature>
<feature type="repeat" description="LRR 27" evidence="4">
    <location>
        <begin position="719"/>
        <end position="742"/>
    </location>
</feature>
<feature type="repeat" description="LRR 28" evidence="4">
    <location>
        <begin position="744"/>
        <end position="766"/>
    </location>
</feature>
<feature type="repeat" description="LRR 29" evidence="4">
    <location>
        <begin position="767"/>
        <end position="791"/>
    </location>
</feature>
<feature type="repeat" description="LRR 30" evidence="4">
    <location>
        <begin position="792"/>
        <end position="815"/>
    </location>
</feature>
<feature type="repeat" description="LRR 31" evidence="4">
    <location>
        <begin position="817"/>
        <end position="838"/>
    </location>
</feature>
<feature type="domain" description="Protein kinase" evidence="5">
    <location>
        <begin position="951"/>
        <end position="1240"/>
    </location>
</feature>
<feature type="active site" description="Proton acceptor" evidence="5">
    <location>
        <position position="1084"/>
    </location>
</feature>
<feature type="binding site" evidence="5">
    <location>
        <begin position="957"/>
        <end position="965"/>
    </location>
    <ligand>
        <name>ATP</name>
        <dbReference type="ChEBI" id="CHEBI:30616"/>
    </ligand>
</feature>
<feature type="binding site" evidence="5">
    <location>
        <position position="979"/>
    </location>
    <ligand>
        <name>ATP</name>
        <dbReference type="ChEBI" id="CHEBI:30616"/>
    </ligand>
</feature>
<feature type="modified residue" description="Phosphothreonine" evidence="2">
    <location>
        <position position="948"/>
    </location>
</feature>
<feature type="modified residue" description="Phosphotyrosine" evidence="2">
    <location>
        <position position="1027"/>
    </location>
</feature>
<feature type="modified residue" description="Phosphotyrosine" evidence="1">
    <location>
        <position position="1071"/>
    </location>
</feature>
<feature type="modified residue" description="Phosphotyrosine" evidence="1">
    <location>
        <position position="1129"/>
    </location>
</feature>
<feature type="modified residue" description="Phosphotyrosine" evidence="3">
    <location>
        <position position="1136"/>
    </location>
</feature>
<feature type="glycosylation site" description="N-linked (GlcNAc...) asparagine" evidence="6">
    <location>
        <position position="77"/>
    </location>
</feature>
<feature type="glycosylation site" description="N-linked (GlcNAc...) asparagine" evidence="6">
    <location>
        <position position="117"/>
    </location>
</feature>
<feature type="glycosylation site" description="N-linked (GlcNAc...) asparagine" evidence="6">
    <location>
        <position position="213"/>
    </location>
</feature>
<feature type="glycosylation site" description="N-linked (GlcNAc...) asparagine" evidence="6">
    <location>
        <position position="228"/>
    </location>
</feature>
<feature type="glycosylation site" description="N-linked (GlcNAc...) asparagine" evidence="6">
    <location>
        <position position="248"/>
    </location>
</feature>
<feature type="glycosylation site" description="N-linked (GlcNAc...) asparagine" evidence="6">
    <location>
        <position position="298"/>
    </location>
</feature>
<feature type="glycosylation site" description="N-linked (GlcNAc...) asparagine" evidence="6">
    <location>
        <position position="309"/>
    </location>
</feature>
<feature type="glycosylation site" description="N-linked (GlcNAc...) asparagine" evidence="6">
    <location>
        <position position="334"/>
    </location>
</feature>
<feature type="glycosylation site" description="N-linked (GlcNAc...) asparagine" evidence="6">
    <location>
        <position position="369"/>
    </location>
</feature>
<feature type="glycosylation site" description="N-linked (GlcNAc...) asparagine" evidence="6">
    <location>
        <position position="393"/>
    </location>
</feature>
<feature type="glycosylation site" description="N-linked (GlcNAc...) asparagine" evidence="6">
    <location>
        <position position="406"/>
    </location>
</feature>
<feature type="glycosylation site" description="N-linked (GlcNAc...) asparagine" evidence="6">
    <location>
        <position position="454"/>
    </location>
</feature>
<feature type="glycosylation site" description="N-linked (GlcNAc...) asparagine" evidence="6">
    <location>
        <position position="537"/>
    </location>
</feature>
<feature type="glycosylation site" description="N-linked (GlcNAc...) asparagine" evidence="6">
    <location>
        <position position="553"/>
    </location>
</feature>
<feature type="glycosylation site" description="N-linked (GlcNAc...) asparagine" evidence="6">
    <location>
        <position position="558"/>
    </location>
</feature>
<feature type="glycosylation site" description="N-linked (GlcNAc...) asparagine" evidence="6">
    <location>
        <position position="565"/>
    </location>
</feature>
<feature type="glycosylation site" description="N-linked (GlcNAc...) asparagine" evidence="6">
    <location>
        <position position="693"/>
    </location>
</feature>
<feature type="glycosylation site" description="N-linked (GlcNAc...) asparagine" evidence="6">
    <location>
        <position position="708"/>
    </location>
</feature>
<feature type="glycosylation site" description="N-linked (GlcNAc...) asparagine" evidence="6">
    <location>
        <position position="779"/>
    </location>
</feature>
<feature type="glycosylation site" description="N-linked (GlcNAc...) asparagine" evidence="6">
    <location>
        <position position="822"/>
    </location>
</feature>
<feature type="mutagenesis site" description="In sgn3-5; altered CASP proteins localization in Casparian strips." evidence="9">
    <original>P</original>
    <variation>L</variation>
    <location>
        <position position="160"/>
    </location>
</feature>
<feature type="mutagenesis site" description="In sgn3-8; altered CASP proteins localization in Casparian strips; when associated with R-1101." evidence="9">
    <original>G</original>
    <variation>R</variation>
    <location>
        <position position="287"/>
    </location>
</feature>
<feature type="mutagenesis site" description="In sgn3-12; altered CASP proteins localization in Casparian strips; when associated with E-1150." evidence="9">
    <original>G</original>
    <variation>R</variation>
    <location>
        <position position="719"/>
    </location>
</feature>
<feature type="mutagenesis site" description="In sgn3-8; altered CASP proteins localization in Casparian strips; when associated with R-287." evidence="9">
    <original>G</original>
    <variation>R</variation>
    <location>
        <position position="1101"/>
    </location>
</feature>
<feature type="mutagenesis site" description="In sgn3-18; altered CASP proteins localization in Casparian strips. In sgn3-12; altered CASP proteins localization in Casparian strips; when associated with R-719." evidence="9">
    <original>G</original>
    <variation>E</variation>
    <location>
        <position position="1150"/>
    </location>
</feature>
<feature type="mutagenesis site" description="In sgn3-17; altered CASP proteins localization in Casparian strips." evidence="9">
    <original>G</original>
    <variation>R</variation>
    <location>
        <position position="1150"/>
    </location>
</feature>
<feature type="helix" evidence="16">
    <location>
        <begin position="28"/>
        <end position="39"/>
    </location>
</feature>
<feature type="turn" evidence="16">
    <location>
        <begin position="46"/>
        <end position="49"/>
    </location>
</feature>
<feature type="helix" evidence="16">
    <location>
        <begin position="57"/>
        <end position="59"/>
    </location>
</feature>
<feature type="strand" evidence="16">
    <location>
        <begin position="63"/>
        <end position="65"/>
    </location>
</feature>
<feature type="strand" evidence="16">
    <location>
        <begin position="73"/>
        <end position="77"/>
    </location>
</feature>
<feature type="helix" evidence="16">
    <location>
        <begin position="89"/>
        <end position="93"/>
    </location>
</feature>
<feature type="strand" evidence="16">
    <location>
        <begin position="99"/>
        <end position="101"/>
    </location>
</feature>
<feature type="helix" evidence="16">
    <location>
        <begin position="113"/>
        <end position="116"/>
    </location>
</feature>
<feature type="strand" evidence="16">
    <location>
        <begin position="123"/>
        <end position="125"/>
    </location>
</feature>
<feature type="strand" evidence="16">
    <location>
        <begin position="129"/>
        <end position="131"/>
    </location>
</feature>
<feature type="helix" evidence="16">
    <location>
        <begin position="137"/>
        <end position="141"/>
    </location>
</feature>
<feature type="strand" evidence="16">
    <location>
        <begin position="147"/>
        <end position="149"/>
    </location>
</feature>
<feature type="helix" evidence="16">
    <location>
        <begin position="161"/>
        <end position="165"/>
    </location>
</feature>
<feature type="strand" evidence="16">
    <location>
        <begin position="171"/>
        <end position="173"/>
    </location>
</feature>
<feature type="helix" evidence="16">
    <location>
        <begin position="185"/>
        <end position="187"/>
    </location>
</feature>
<feature type="strand" evidence="16">
    <location>
        <begin position="194"/>
        <end position="197"/>
    </location>
</feature>
<feature type="strand" evidence="16">
    <location>
        <begin position="200"/>
        <end position="205"/>
    </location>
</feature>
<feature type="helix" evidence="16">
    <location>
        <begin position="209"/>
        <end position="213"/>
    </location>
</feature>
<feature type="strand" evidence="16">
    <location>
        <begin position="219"/>
        <end position="221"/>
    </location>
</feature>
<feature type="strand" evidence="16">
    <location>
        <begin position="224"/>
        <end position="227"/>
    </location>
</feature>
<feature type="helix" evidence="16">
    <location>
        <begin position="233"/>
        <end position="237"/>
    </location>
</feature>
<feature type="strand" evidence="16">
    <location>
        <begin position="243"/>
        <end position="245"/>
    </location>
</feature>
<feature type="strand" evidence="16">
    <location>
        <begin position="252"/>
        <end position="254"/>
    </location>
</feature>
<feature type="helix" evidence="16">
    <location>
        <begin position="257"/>
        <end position="261"/>
    </location>
</feature>
<feature type="strand" evidence="16">
    <location>
        <begin position="267"/>
        <end position="269"/>
    </location>
</feature>
<feature type="strand" evidence="16">
    <location>
        <begin position="272"/>
        <end position="278"/>
    </location>
</feature>
<feature type="helix" evidence="16">
    <location>
        <begin position="281"/>
        <end position="285"/>
    </location>
</feature>
<feature type="strand" evidence="16">
    <location>
        <begin position="291"/>
        <end position="293"/>
    </location>
</feature>
<feature type="strand" evidence="16">
    <location>
        <begin position="296"/>
        <end position="301"/>
    </location>
</feature>
<feature type="helix" evidence="16">
    <location>
        <begin position="305"/>
        <end position="309"/>
    </location>
</feature>
<feature type="strand" evidence="16">
    <location>
        <begin position="315"/>
        <end position="317"/>
    </location>
</feature>
<feature type="strand" evidence="16">
    <location>
        <begin position="320"/>
        <end position="323"/>
    </location>
</feature>
<feature type="turn" evidence="16">
    <location>
        <begin position="329"/>
        <end position="332"/>
    </location>
</feature>
<feature type="strand" evidence="16">
    <location>
        <begin position="340"/>
        <end position="342"/>
    </location>
</feature>
<feature type="strand" evidence="16">
    <location>
        <begin position="349"/>
        <end position="351"/>
    </location>
</feature>
<feature type="helix" evidence="16">
    <location>
        <begin position="354"/>
        <end position="358"/>
    </location>
</feature>
<feature type="strand" evidence="16">
    <location>
        <begin position="364"/>
        <end position="366"/>
    </location>
</feature>
<feature type="strand" evidence="16">
    <location>
        <begin position="369"/>
        <end position="374"/>
    </location>
</feature>
<feature type="helix" evidence="16">
    <location>
        <begin position="378"/>
        <end position="382"/>
    </location>
</feature>
<feature type="strand" evidence="16">
    <location>
        <begin position="387"/>
        <end position="390"/>
    </location>
</feature>
<feature type="helix" evidence="16">
    <location>
        <begin position="402"/>
        <end position="406"/>
    </location>
</feature>
<feature type="strand" evidence="16">
    <location>
        <begin position="412"/>
        <end position="414"/>
    </location>
</feature>
<feature type="strand" evidence="16">
    <location>
        <begin position="417"/>
        <end position="422"/>
    </location>
</feature>
<feature type="helix" evidence="16">
    <location>
        <begin position="426"/>
        <end position="430"/>
    </location>
</feature>
<feature type="strand" evidence="16">
    <location>
        <begin position="436"/>
        <end position="438"/>
    </location>
</feature>
<feature type="strand" evidence="16">
    <location>
        <begin position="441"/>
        <end position="446"/>
    </location>
</feature>
<feature type="helix" evidence="16">
    <location>
        <begin position="450"/>
        <end position="454"/>
    </location>
</feature>
<feature type="strand" evidence="16">
    <location>
        <begin position="460"/>
        <end position="462"/>
    </location>
</feature>
<feature type="strand" evidence="16">
    <location>
        <begin position="466"/>
        <end position="470"/>
    </location>
</feature>
<feature type="helix" evidence="16">
    <location>
        <begin position="474"/>
        <end position="478"/>
    </location>
</feature>
<feature type="strand" evidence="16">
    <location>
        <begin position="484"/>
        <end position="486"/>
    </location>
</feature>
<feature type="strand" evidence="16">
    <location>
        <begin position="490"/>
        <end position="494"/>
    </location>
</feature>
<feature type="helix" evidence="16">
    <location>
        <begin position="498"/>
        <end position="502"/>
    </location>
</feature>
<feature type="strand" evidence="16">
    <location>
        <begin position="507"/>
        <end position="510"/>
    </location>
</feature>
<feature type="strand" evidence="16">
    <location>
        <begin position="513"/>
        <end position="518"/>
    </location>
</feature>
<feature type="helix" evidence="16">
    <location>
        <begin position="522"/>
        <end position="526"/>
    </location>
</feature>
<feature type="strand" evidence="16">
    <location>
        <begin position="532"/>
        <end position="534"/>
    </location>
</feature>
<feature type="strand" evidence="16">
    <location>
        <begin position="537"/>
        <end position="543"/>
    </location>
</feature>
<feature type="helix" evidence="16">
    <location>
        <begin position="546"/>
        <end position="550"/>
    </location>
</feature>
<feature type="strand" evidence="16">
    <location>
        <begin position="556"/>
        <end position="558"/>
    </location>
</feature>
<feature type="strand" evidence="16">
    <location>
        <begin position="561"/>
        <end position="566"/>
    </location>
</feature>
<feature type="helix" evidence="16">
    <location>
        <begin position="569"/>
        <end position="571"/>
    </location>
</feature>
<feature type="strand" evidence="16">
    <location>
        <begin position="578"/>
        <end position="581"/>
    </location>
</feature>
<feature type="strand" evidence="16">
    <location>
        <begin position="584"/>
        <end position="590"/>
    </location>
</feature>
<feature type="helix" evidence="16">
    <location>
        <begin position="593"/>
        <end position="597"/>
    </location>
</feature>
<feature type="strand" evidence="16">
    <location>
        <begin position="603"/>
        <end position="605"/>
    </location>
</feature>
<feature type="strand" evidence="16">
    <location>
        <begin position="608"/>
        <end position="613"/>
    </location>
</feature>
<feature type="helix" evidence="16">
    <location>
        <begin position="617"/>
        <end position="621"/>
    </location>
</feature>
<feature type="strand" evidence="16">
    <location>
        <begin position="627"/>
        <end position="629"/>
    </location>
</feature>
<feature type="strand" evidence="16">
    <location>
        <begin position="633"/>
        <end position="637"/>
    </location>
</feature>
<feature type="helix" evidence="16">
    <location>
        <begin position="641"/>
        <end position="645"/>
    </location>
</feature>
<feature type="strand" evidence="16">
    <location>
        <begin position="651"/>
        <end position="653"/>
    </location>
</feature>
<feature type="strand" evidence="16">
    <location>
        <begin position="656"/>
        <end position="661"/>
    </location>
</feature>
<feature type="helix" evidence="16">
    <location>
        <begin position="665"/>
        <end position="669"/>
    </location>
</feature>
<feature type="strand" evidence="16">
    <location>
        <begin position="675"/>
        <end position="677"/>
    </location>
</feature>
<feature type="strand" evidence="16">
    <location>
        <begin position="680"/>
        <end position="683"/>
    </location>
</feature>
<feature type="helix" evidence="16">
    <location>
        <begin position="689"/>
        <end position="693"/>
    </location>
</feature>
<feature type="strand" evidence="16">
    <location>
        <begin position="698"/>
        <end position="701"/>
    </location>
</feature>
<feature type="helix" evidence="16">
    <location>
        <begin position="713"/>
        <end position="717"/>
    </location>
</feature>
<feature type="strand" evidence="16">
    <location>
        <begin position="723"/>
        <end position="725"/>
    </location>
</feature>
<feature type="helix" evidence="16">
    <location>
        <begin position="737"/>
        <end position="741"/>
    </location>
</feature>
<feature type="strand" evidence="16">
    <location>
        <begin position="747"/>
        <end position="749"/>
    </location>
</feature>
<feature type="helix" evidence="16">
    <location>
        <begin position="761"/>
        <end position="765"/>
    </location>
</feature>
<feature type="helix" evidence="16">
    <location>
        <begin position="786"/>
        <end position="790"/>
    </location>
</feature>
<feature type="strand" evidence="16">
    <location>
        <begin position="796"/>
        <end position="798"/>
    </location>
</feature>
<feature type="strand" evidence="16">
    <location>
        <begin position="801"/>
        <end position="806"/>
    </location>
</feature>
<feature type="turn" evidence="16">
    <location>
        <begin position="811"/>
        <end position="813"/>
    </location>
</feature>
<feature type="strand" evidence="16">
    <location>
        <begin position="820"/>
        <end position="822"/>
    </location>
</feature>
<feature type="strand" evidence="16">
    <location>
        <begin position="825"/>
        <end position="828"/>
    </location>
</feature>
<feature type="helix" evidence="16">
    <location>
        <begin position="834"/>
        <end position="836"/>
    </location>
</feature>
<feature type="helix" evidence="16">
    <location>
        <begin position="841"/>
        <end position="844"/>
    </location>
</feature>
<feature type="strand" evidence="16">
    <location>
        <begin position="850"/>
        <end position="852"/>
    </location>
</feature>